<proteinExistence type="inferred from homology"/>
<accession>B2TZI3</accession>
<dbReference type="EMBL" id="CP001063">
    <property type="protein sequence ID" value="ACD07990.1"/>
    <property type="molecule type" value="Genomic_DNA"/>
</dbReference>
<dbReference type="RefSeq" id="WP_000517474.1">
    <property type="nucleotide sequence ID" value="NC_010658.1"/>
</dbReference>
<dbReference type="SMR" id="B2TZI3"/>
<dbReference type="STRING" id="344609.SbBS512_E3126"/>
<dbReference type="KEGG" id="sbc:SbBS512_E3126"/>
<dbReference type="HOGENOM" id="CLU_134863_5_2_6"/>
<dbReference type="Proteomes" id="UP000001030">
    <property type="component" value="Chromosome"/>
</dbReference>
<dbReference type="GO" id="GO:0032153">
    <property type="term" value="C:cell division site"/>
    <property type="evidence" value="ECO:0007669"/>
    <property type="project" value="UniProtKB-UniRule"/>
</dbReference>
<dbReference type="GO" id="GO:0030428">
    <property type="term" value="C:cell septum"/>
    <property type="evidence" value="ECO:0007669"/>
    <property type="project" value="TreeGrafter"/>
</dbReference>
<dbReference type="GO" id="GO:0005886">
    <property type="term" value="C:plasma membrane"/>
    <property type="evidence" value="ECO:0007669"/>
    <property type="project" value="UniProtKB-SubCell"/>
</dbReference>
<dbReference type="GO" id="GO:0043093">
    <property type="term" value="P:FtsZ-dependent cytokinesis"/>
    <property type="evidence" value="ECO:0007669"/>
    <property type="project" value="UniProtKB-UniRule"/>
</dbReference>
<dbReference type="FunFam" id="1.20.5.400:FF:000001">
    <property type="entry name" value="Cell division protein FtsB"/>
    <property type="match status" value="1"/>
</dbReference>
<dbReference type="Gene3D" id="1.20.5.400">
    <property type="match status" value="1"/>
</dbReference>
<dbReference type="HAMAP" id="MF_00599">
    <property type="entry name" value="FtsB"/>
    <property type="match status" value="1"/>
</dbReference>
<dbReference type="InterPro" id="IPR023081">
    <property type="entry name" value="Cell_div_FtsB"/>
</dbReference>
<dbReference type="InterPro" id="IPR007060">
    <property type="entry name" value="FtsL/DivIC"/>
</dbReference>
<dbReference type="NCBIfam" id="NF002058">
    <property type="entry name" value="PRK00888.1"/>
    <property type="match status" value="1"/>
</dbReference>
<dbReference type="PANTHER" id="PTHR37485">
    <property type="entry name" value="CELL DIVISION PROTEIN FTSB"/>
    <property type="match status" value="1"/>
</dbReference>
<dbReference type="PANTHER" id="PTHR37485:SF1">
    <property type="entry name" value="CELL DIVISION PROTEIN FTSB"/>
    <property type="match status" value="1"/>
</dbReference>
<dbReference type="Pfam" id="PF04977">
    <property type="entry name" value="DivIC"/>
    <property type="match status" value="1"/>
</dbReference>
<evidence type="ECO:0000255" key="1">
    <source>
        <dbReference type="HAMAP-Rule" id="MF_00599"/>
    </source>
</evidence>
<keyword id="KW-0131">Cell cycle</keyword>
<keyword id="KW-0132">Cell division</keyword>
<keyword id="KW-0997">Cell inner membrane</keyword>
<keyword id="KW-1003">Cell membrane</keyword>
<keyword id="KW-0175">Coiled coil</keyword>
<keyword id="KW-0472">Membrane</keyword>
<keyword id="KW-1185">Reference proteome</keyword>
<keyword id="KW-0812">Transmembrane</keyword>
<keyword id="KW-1133">Transmembrane helix</keyword>
<organism>
    <name type="scientific">Shigella boydii serotype 18 (strain CDC 3083-94 / BS512)</name>
    <dbReference type="NCBI Taxonomy" id="344609"/>
    <lineage>
        <taxon>Bacteria</taxon>
        <taxon>Pseudomonadati</taxon>
        <taxon>Pseudomonadota</taxon>
        <taxon>Gammaproteobacteria</taxon>
        <taxon>Enterobacterales</taxon>
        <taxon>Enterobacteriaceae</taxon>
        <taxon>Shigella</taxon>
    </lineage>
</organism>
<feature type="chain" id="PRO_1000129945" description="Cell division protein FtsB">
    <location>
        <begin position="1"/>
        <end position="103"/>
    </location>
</feature>
<feature type="topological domain" description="Cytoplasmic" evidence="1">
    <location>
        <begin position="1"/>
        <end position="3"/>
    </location>
</feature>
<feature type="transmembrane region" description="Helical" evidence="1">
    <location>
        <begin position="4"/>
        <end position="21"/>
    </location>
</feature>
<feature type="topological domain" description="Periplasmic" evidence="1">
    <location>
        <begin position="22"/>
        <end position="103"/>
    </location>
</feature>
<feature type="coiled-coil region" evidence="1">
    <location>
        <begin position="31"/>
        <end position="71"/>
    </location>
</feature>
<reference key="1">
    <citation type="submission" date="2008-05" db="EMBL/GenBank/DDBJ databases">
        <title>Complete sequence of Shigella boydii serotype 18 strain BS512.</title>
        <authorList>
            <person name="Rasko D.A."/>
            <person name="Rosovitz M."/>
            <person name="Maurelli A.T."/>
            <person name="Myers G."/>
            <person name="Seshadri R."/>
            <person name="Cer R."/>
            <person name="Jiang L."/>
            <person name="Ravel J."/>
            <person name="Sebastian Y."/>
        </authorList>
    </citation>
    <scope>NUCLEOTIDE SEQUENCE [LARGE SCALE GENOMIC DNA]</scope>
    <source>
        <strain>CDC 3083-94 / BS512</strain>
    </source>
</reference>
<sequence length="103" mass="11594">MGKLTLLLLAILVWLQYSLWFGKNGIHDYTRVNDDVAAQQATNAKLKARNDQLFAEIDDLNGGQEALEERARNELSMTKPGETFYRLVPDASKRAQSAGQNNR</sequence>
<name>FTSB_SHIB3</name>
<gene>
    <name evidence="1" type="primary">ftsB</name>
    <name type="ordered locus">SbBS512_E3126</name>
</gene>
<comment type="function">
    <text evidence="1">Essential cell division protein. May link together the upstream cell division proteins, which are predominantly cytoplasmic, with the downstream cell division proteins, which are predominantly periplasmic.</text>
</comment>
<comment type="subunit">
    <text evidence="1">Part of a complex composed of FtsB, FtsL and FtsQ.</text>
</comment>
<comment type="subcellular location">
    <subcellularLocation>
        <location evidence="1">Cell inner membrane</location>
        <topology evidence="1">Single-pass type II membrane protein</topology>
    </subcellularLocation>
    <text evidence="1">Localizes to the division septum.</text>
</comment>
<comment type="similarity">
    <text evidence="1">Belongs to the FtsB family.</text>
</comment>
<protein>
    <recommendedName>
        <fullName evidence="1">Cell division protein FtsB</fullName>
    </recommendedName>
</protein>